<proteinExistence type="inferred from homology"/>
<feature type="transit peptide" description="Chloroplast" evidence="3">
    <location>
        <begin position="1"/>
        <end position="70"/>
    </location>
</feature>
<feature type="chain" id="PRO_0000423479" description="L-aspartate oxidase, chloroplastic">
    <location>
        <begin position="71"/>
        <end position="645"/>
    </location>
</feature>
<feature type="active site" description="Proton donor/acceptor" evidence="2">
    <location>
        <position position="368"/>
    </location>
</feature>
<feature type="binding site" evidence="2">
    <location>
        <begin position="92"/>
        <end position="95"/>
    </location>
    <ligand>
        <name>FAD</name>
        <dbReference type="ChEBI" id="CHEBI:57692"/>
    </ligand>
</feature>
<feature type="binding site" evidence="2">
    <location>
        <position position="114"/>
    </location>
    <ligand>
        <name>FAD</name>
        <dbReference type="ChEBI" id="CHEBI:57692"/>
    </ligand>
</feature>
<feature type="binding site" evidence="2">
    <location>
        <begin position="121"/>
        <end position="128"/>
    </location>
    <ligand>
        <name>FAD</name>
        <dbReference type="ChEBI" id="CHEBI:57692"/>
    </ligand>
</feature>
<feature type="binding site" evidence="2">
    <location>
        <position position="292"/>
    </location>
    <ligand>
        <name>FAD</name>
        <dbReference type="ChEBI" id="CHEBI:57692"/>
    </ligand>
</feature>
<feature type="binding site" evidence="2">
    <location>
        <position position="453"/>
    </location>
    <ligand>
        <name>FAD</name>
        <dbReference type="ChEBI" id="CHEBI:57692"/>
    </ligand>
</feature>
<feature type="binding site" evidence="2">
    <location>
        <begin position="469"/>
        <end position="470"/>
    </location>
    <ligand>
        <name>FAD</name>
        <dbReference type="ChEBI" id="CHEBI:57692"/>
    </ligand>
</feature>
<feature type="site" description="Important in orienting the L-aspartate substrate" evidence="2">
    <location>
        <position position="193"/>
    </location>
</feature>
<name>NADB_ORYSJ</name>
<dbReference type="EC" id="1.4.3.16"/>
<dbReference type="EMBL" id="AP004799">
    <property type="protein sequence ID" value="BAD10088.1"/>
    <property type="molecule type" value="Genomic_DNA"/>
</dbReference>
<dbReference type="EMBL" id="AP008208">
    <property type="protein sequence ID" value="BAF07726.1"/>
    <property type="molecule type" value="Genomic_DNA"/>
</dbReference>
<dbReference type="EMBL" id="AP014958">
    <property type="protein sequence ID" value="BAS76849.1"/>
    <property type="molecule type" value="Genomic_DNA"/>
</dbReference>
<dbReference type="RefSeq" id="XP_015622817.1">
    <property type="nucleotide sequence ID" value="XM_015767331.1"/>
</dbReference>
<dbReference type="RefSeq" id="XP_015622818.1">
    <property type="nucleotide sequence ID" value="XM_015767332.1"/>
</dbReference>
<dbReference type="SMR" id="Q6Z836"/>
<dbReference type="FunCoup" id="Q6Z836">
    <property type="interactions" value="208"/>
</dbReference>
<dbReference type="STRING" id="39947.Q6Z836"/>
<dbReference type="PaxDb" id="39947-Q6Z836"/>
<dbReference type="EnsemblPlants" id="Os02t0134400-01">
    <property type="protein sequence ID" value="Os02t0134400-01"/>
    <property type="gene ID" value="Os02g0134400"/>
</dbReference>
<dbReference type="Gramene" id="Os02t0134400-01">
    <property type="protein sequence ID" value="Os02t0134400-01"/>
    <property type="gene ID" value="Os02g0134400"/>
</dbReference>
<dbReference type="KEGG" id="dosa:Os02g0134400"/>
<dbReference type="eggNOG" id="KOG2403">
    <property type="taxonomic scope" value="Eukaryota"/>
</dbReference>
<dbReference type="HOGENOM" id="CLU_014312_3_0_1"/>
<dbReference type="InParanoid" id="Q6Z836"/>
<dbReference type="OMA" id="HCVQWLI"/>
<dbReference type="OrthoDB" id="71672at2759"/>
<dbReference type="PlantReactome" id="R-OSA-1119384">
    <property type="pathway name" value="NAD biosynthesis I (from aspartate)"/>
</dbReference>
<dbReference type="UniPathway" id="UPA00253">
    <property type="reaction ID" value="UER00326"/>
</dbReference>
<dbReference type="Proteomes" id="UP000000763">
    <property type="component" value="Chromosome 2"/>
</dbReference>
<dbReference type="Proteomes" id="UP000059680">
    <property type="component" value="Chromosome 2"/>
</dbReference>
<dbReference type="GO" id="GO:0009507">
    <property type="term" value="C:chloroplast"/>
    <property type="evidence" value="ECO:0007669"/>
    <property type="project" value="UniProtKB-SubCell"/>
</dbReference>
<dbReference type="GO" id="GO:0008734">
    <property type="term" value="F:L-aspartate oxidase activity"/>
    <property type="evidence" value="ECO:0007669"/>
    <property type="project" value="UniProtKB-EC"/>
</dbReference>
<dbReference type="GO" id="GO:0000166">
    <property type="term" value="F:nucleotide binding"/>
    <property type="evidence" value="ECO:0007669"/>
    <property type="project" value="UniProtKB-KW"/>
</dbReference>
<dbReference type="GO" id="GO:0009435">
    <property type="term" value="P:NAD biosynthetic process"/>
    <property type="evidence" value="ECO:0007669"/>
    <property type="project" value="UniProtKB-UniPathway"/>
</dbReference>
<dbReference type="FunFam" id="3.90.700.10:FF:000002">
    <property type="entry name" value="L-aspartate oxidase"/>
    <property type="match status" value="1"/>
</dbReference>
<dbReference type="Gene3D" id="3.50.50.60">
    <property type="entry name" value="FAD/NAD(P)-binding domain"/>
    <property type="match status" value="1"/>
</dbReference>
<dbReference type="Gene3D" id="1.20.58.100">
    <property type="entry name" value="Fumarate reductase/succinate dehydrogenase flavoprotein-like, C-terminal domain"/>
    <property type="match status" value="1"/>
</dbReference>
<dbReference type="Gene3D" id="3.90.700.10">
    <property type="entry name" value="Succinate dehydrogenase/fumarate reductase flavoprotein, catalytic domain"/>
    <property type="match status" value="1"/>
</dbReference>
<dbReference type="InterPro" id="IPR003953">
    <property type="entry name" value="FAD-dep_OxRdtase_2_FAD-bd"/>
</dbReference>
<dbReference type="InterPro" id="IPR036188">
    <property type="entry name" value="FAD/NAD-bd_sf"/>
</dbReference>
<dbReference type="InterPro" id="IPR037099">
    <property type="entry name" value="Fum_R/Succ_DH_flav-like_C_sf"/>
</dbReference>
<dbReference type="InterPro" id="IPR015939">
    <property type="entry name" value="Fum_Rdtase/Succ_DH_flav-like_C"/>
</dbReference>
<dbReference type="InterPro" id="IPR005288">
    <property type="entry name" value="NadB"/>
</dbReference>
<dbReference type="InterPro" id="IPR027477">
    <property type="entry name" value="Succ_DH/fumarate_Rdtase_cat_sf"/>
</dbReference>
<dbReference type="NCBIfam" id="TIGR00551">
    <property type="entry name" value="nadB"/>
    <property type="match status" value="1"/>
</dbReference>
<dbReference type="PANTHER" id="PTHR42716">
    <property type="entry name" value="L-ASPARTATE OXIDASE"/>
    <property type="match status" value="1"/>
</dbReference>
<dbReference type="PANTHER" id="PTHR42716:SF2">
    <property type="entry name" value="L-ASPARTATE OXIDASE, CHLOROPLASTIC"/>
    <property type="match status" value="1"/>
</dbReference>
<dbReference type="Pfam" id="PF00890">
    <property type="entry name" value="FAD_binding_2"/>
    <property type="match status" value="1"/>
</dbReference>
<dbReference type="Pfam" id="PF02910">
    <property type="entry name" value="Succ_DH_flav_C"/>
    <property type="match status" value="1"/>
</dbReference>
<dbReference type="PRINTS" id="PR00368">
    <property type="entry name" value="FADPNR"/>
</dbReference>
<dbReference type="SUPFAM" id="SSF51905">
    <property type="entry name" value="FAD/NAD(P)-binding domain"/>
    <property type="match status" value="1"/>
</dbReference>
<dbReference type="SUPFAM" id="SSF46977">
    <property type="entry name" value="Succinate dehydrogenase/fumarate reductase flavoprotein C-terminal domain"/>
    <property type="match status" value="1"/>
</dbReference>
<dbReference type="SUPFAM" id="SSF56425">
    <property type="entry name" value="Succinate dehydrogenase/fumarate reductase flavoprotein, catalytic domain"/>
    <property type="match status" value="1"/>
</dbReference>
<protein>
    <recommendedName>
        <fullName>L-aspartate oxidase, chloroplastic</fullName>
        <ecNumber>1.4.3.16</ecNumber>
    </recommendedName>
    <alternativeName>
        <fullName>Protein FLAGELLIN-INSENSITIVE 4</fullName>
    </alternativeName>
</protein>
<gene>
    <name type="ordered locus">Os02g0134400</name>
    <name type="ordered locus">LOC_Os02g04170</name>
    <name type="ORF">P0585B01.16</name>
</gene>
<sequence>MAALMNGFGSLQCKATVHVEKGHMQASGMAFFSPVNRCAQVHISSIPHFIGAKSVSASQLRMRHKVGSIRASAASCLQDETTKYFDFVVIGSGVAGLRYALEVSKYGSVAIITKAEPHESNTNYAQGGVSAVLCPSDSVESHMQDTIVAGAYLCDEETVRVVCTEGPERVKELIAMGASFDHGEDGRLHLAREGGHSHNRIVHSADMTGREIERALLQAVDNDDNISLFGHHFAIDLLTCQSNGEIYCYGVDSLDAETQKAIRFISKVTLLASGGVGHIYPSTTNPPVATGDGIAMSHRAQAVISNMEFVQFHPTALSDEGLPIKPATRRENAFLITEAVRGDGGILYNQSMERFMTSYDDRAELAPRDVVARSIDDQLKKRGEKYVLLDISHKPREKVLAHFPNIAAECLRHGLDITQQPIPVVPAAHYMCGGVRAGLQGETNVKGLYVAGEVACTGLHGANRLASNSLLEALVFARRAVQPSIDHMVDADVDPSFAKKWARPVLSVSLRDSILSDIIEKTKQARMELQSIMWEYVGIVRSTNRLKHAEWKISDLESEWEEFLFRRGWKPTMVGVETCEMRNLFCCAKLVVKSALARHESRGLHFTEDFPYLEESKRKPTVIFPTHIQELTWSSKPLQKQLQCK</sequence>
<reference key="1">
    <citation type="journal article" date="2005" name="Nature">
        <title>The map-based sequence of the rice genome.</title>
        <authorList>
            <consortium name="International rice genome sequencing project (IRGSP)"/>
        </authorList>
    </citation>
    <scope>NUCLEOTIDE SEQUENCE [LARGE SCALE GENOMIC DNA]</scope>
    <source>
        <strain>cv. Nipponbare</strain>
    </source>
</reference>
<reference key="2">
    <citation type="journal article" date="2008" name="Nucleic Acids Res.">
        <title>The rice annotation project database (RAP-DB): 2008 update.</title>
        <authorList>
            <consortium name="The rice annotation project (RAP)"/>
        </authorList>
    </citation>
    <scope>GENOME REANNOTATION</scope>
    <source>
        <strain>cv. Nipponbare</strain>
    </source>
</reference>
<reference key="3">
    <citation type="journal article" date="2013" name="Rice">
        <title>Improvement of the Oryza sativa Nipponbare reference genome using next generation sequence and optical map data.</title>
        <authorList>
            <person name="Kawahara Y."/>
            <person name="de la Bastide M."/>
            <person name="Hamilton J.P."/>
            <person name="Kanamori H."/>
            <person name="McCombie W.R."/>
            <person name="Ouyang S."/>
            <person name="Schwartz D.C."/>
            <person name="Tanaka T."/>
            <person name="Wu J."/>
            <person name="Zhou S."/>
            <person name="Childs K.L."/>
            <person name="Davidson R.M."/>
            <person name="Lin H."/>
            <person name="Quesada-Ocampo L."/>
            <person name="Vaillancourt B."/>
            <person name="Sakai H."/>
            <person name="Lee S.S."/>
            <person name="Kim J."/>
            <person name="Numa H."/>
            <person name="Itoh T."/>
            <person name="Buell C.R."/>
            <person name="Matsumoto T."/>
        </authorList>
    </citation>
    <scope>GENOME REANNOTATION</scope>
    <source>
        <strain>cv. Nipponbare</strain>
    </source>
</reference>
<comment type="function">
    <text evidence="1">Catalyzes the oxidation of L-aspartate to iminoaspartate.</text>
</comment>
<comment type="catalytic activity">
    <reaction>
        <text>L-aspartate + O2 = iminosuccinate + H2O2</text>
        <dbReference type="Rhea" id="RHEA:25876"/>
        <dbReference type="ChEBI" id="CHEBI:15379"/>
        <dbReference type="ChEBI" id="CHEBI:16240"/>
        <dbReference type="ChEBI" id="CHEBI:29991"/>
        <dbReference type="ChEBI" id="CHEBI:77875"/>
        <dbReference type="EC" id="1.4.3.16"/>
    </reaction>
</comment>
<comment type="cofactor">
    <cofactor evidence="2">
        <name>FAD</name>
        <dbReference type="ChEBI" id="CHEBI:57692"/>
    </cofactor>
    <text evidence="2">Binds 1 FAD per subunit.</text>
</comment>
<comment type="pathway">
    <text>Cofactor biosynthesis; NAD(+) biosynthesis; iminoaspartate from L-aspartate (oxidase route): step 1/1.</text>
</comment>
<comment type="subcellular location">
    <subcellularLocation>
        <location evidence="4">Plastid</location>
        <location evidence="4">Chloroplast</location>
    </subcellularLocation>
</comment>
<comment type="similarity">
    <text evidence="4">Belongs to the FAD-dependent oxidoreductase 2 family. NadB subfamily.</text>
</comment>
<accession>Q6Z836</accession>
<accession>A0A0N7KEM7</accession>
<organism>
    <name type="scientific">Oryza sativa subsp. japonica</name>
    <name type="common">Rice</name>
    <dbReference type="NCBI Taxonomy" id="39947"/>
    <lineage>
        <taxon>Eukaryota</taxon>
        <taxon>Viridiplantae</taxon>
        <taxon>Streptophyta</taxon>
        <taxon>Embryophyta</taxon>
        <taxon>Tracheophyta</taxon>
        <taxon>Spermatophyta</taxon>
        <taxon>Magnoliopsida</taxon>
        <taxon>Liliopsida</taxon>
        <taxon>Poales</taxon>
        <taxon>Poaceae</taxon>
        <taxon>BOP clade</taxon>
        <taxon>Oryzoideae</taxon>
        <taxon>Oryzeae</taxon>
        <taxon>Oryzinae</taxon>
        <taxon>Oryza</taxon>
        <taxon>Oryza sativa</taxon>
    </lineage>
</organism>
<keyword id="KW-0150">Chloroplast</keyword>
<keyword id="KW-0274">FAD</keyword>
<keyword id="KW-0285">Flavoprotein</keyword>
<keyword id="KW-0547">Nucleotide-binding</keyword>
<keyword id="KW-0560">Oxidoreductase</keyword>
<keyword id="KW-0934">Plastid</keyword>
<keyword id="KW-0662">Pyridine nucleotide biosynthesis</keyword>
<keyword id="KW-1185">Reference proteome</keyword>
<keyword id="KW-0809">Transit peptide</keyword>
<evidence type="ECO:0000250" key="1"/>
<evidence type="ECO:0000250" key="2">
    <source>
        <dbReference type="UniProtKB" id="P10902"/>
    </source>
</evidence>
<evidence type="ECO:0000255" key="3"/>
<evidence type="ECO:0000305" key="4"/>